<sequence>MRFKTRISNLYTLTRLVQALDKIGRFCWLRLMPETVNFVIVPDFRMTQVWSVLEVETIFEDYVVQSNADNVINLEVPIDNFYKALRSAANASDSTVRLSKKNNQPLLSLSTTWSGRAFGSNIVTHNIPVRVLSQSYVSVIKEPTAPEPDCHIFLPQLNFLRHVVDKYKSLSDRIIMSANMSGELQLSVNIPSARVSTKWKGLENPELDPSQVEDISRHPSQTRAPEEFVHMRLDSKDLVNMLKISSVAKRVIACFCEGHALVLYVYITDPEDEHTAVLTYYISTYVD</sequence>
<gene>
    <name type="primary">hus1</name>
    <name type="ORF">SPAC20G4.04c</name>
</gene>
<reference key="1">
    <citation type="journal article" date="1997" name="Mol. Gen. Genet.">
        <title>Molecular analysis of hus1+, a fission yeast gene required for S-M and DNA damage checkpoints.</title>
        <authorList>
            <person name="Kostrub C.F."/>
            <person name="Al-Khodairy F."/>
            <person name="Ghazizadeh H."/>
            <person name="Carr A.M."/>
            <person name="Enoch T."/>
        </authorList>
    </citation>
    <scope>NUCLEOTIDE SEQUENCE [GENOMIC DNA]</scope>
    <scope>DISRUPTION PHENOTYPE</scope>
</reference>
<reference key="2">
    <citation type="journal article" date="2002" name="Nature">
        <title>The genome sequence of Schizosaccharomyces pombe.</title>
        <authorList>
            <person name="Wood V."/>
            <person name="Gwilliam R."/>
            <person name="Rajandream M.A."/>
            <person name="Lyne M.H."/>
            <person name="Lyne R."/>
            <person name="Stewart A."/>
            <person name="Sgouros J.G."/>
            <person name="Peat N."/>
            <person name="Hayles J."/>
            <person name="Baker S.G."/>
            <person name="Basham D."/>
            <person name="Bowman S."/>
            <person name="Brooks K."/>
            <person name="Brown D."/>
            <person name="Brown S."/>
            <person name="Chillingworth T."/>
            <person name="Churcher C.M."/>
            <person name="Collins M."/>
            <person name="Connor R."/>
            <person name="Cronin A."/>
            <person name="Davis P."/>
            <person name="Feltwell T."/>
            <person name="Fraser A."/>
            <person name="Gentles S."/>
            <person name="Goble A."/>
            <person name="Hamlin N."/>
            <person name="Harris D.E."/>
            <person name="Hidalgo J."/>
            <person name="Hodgson G."/>
            <person name="Holroyd S."/>
            <person name="Hornsby T."/>
            <person name="Howarth S."/>
            <person name="Huckle E.J."/>
            <person name="Hunt S."/>
            <person name="Jagels K."/>
            <person name="James K.D."/>
            <person name="Jones L."/>
            <person name="Jones M."/>
            <person name="Leather S."/>
            <person name="McDonald S."/>
            <person name="McLean J."/>
            <person name="Mooney P."/>
            <person name="Moule S."/>
            <person name="Mungall K.L."/>
            <person name="Murphy L.D."/>
            <person name="Niblett D."/>
            <person name="Odell C."/>
            <person name="Oliver K."/>
            <person name="O'Neil S."/>
            <person name="Pearson D."/>
            <person name="Quail M.A."/>
            <person name="Rabbinowitsch E."/>
            <person name="Rutherford K.M."/>
            <person name="Rutter S."/>
            <person name="Saunders D."/>
            <person name="Seeger K."/>
            <person name="Sharp S."/>
            <person name="Skelton J."/>
            <person name="Simmonds M.N."/>
            <person name="Squares R."/>
            <person name="Squares S."/>
            <person name="Stevens K."/>
            <person name="Taylor K."/>
            <person name="Taylor R.G."/>
            <person name="Tivey A."/>
            <person name="Walsh S.V."/>
            <person name="Warren T."/>
            <person name="Whitehead S."/>
            <person name="Woodward J.R."/>
            <person name="Volckaert G."/>
            <person name="Aert R."/>
            <person name="Robben J."/>
            <person name="Grymonprez B."/>
            <person name="Weltjens I."/>
            <person name="Vanstreels E."/>
            <person name="Rieger M."/>
            <person name="Schaefer M."/>
            <person name="Mueller-Auer S."/>
            <person name="Gabel C."/>
            <person name="Fuchs M."/>
            <person name="Duesterhoeft A."/>
            <person name="Fritzc C."/>
            <person name="Holzer E."/>
            <person name="Moestl D."/>
            <person name="Hilbert H."/>
            <person name="Borzym K."/>
            <person name="Langer I."/>
            <person name="Beck A."/>
            <person name="Lehrach H."/>
            <person name="Reinhardt R."/>
            <person name="Pohl T.M."/>
            <person name="Eger P."/>
            <person name="Zimmermann W."/>
            <person name="Wedler H."/>
            <person name="Wambutt R."/>
            <person name="Purnelle B."/>
            <person name="Goffeau A."/>
            <person name="Cadieu E."/>
            <person name="Dreano S."/>
            <person name="Gloux S."/>
            <person name="Lelaure V."/>
            <person name="Mottier S."/>
            <person name="Galibert F."/>
            <person name="Aves S.J."/>
            <person name="Xiang Z."/>
            <person name="Hunt C."/>
            <person name="Moore K."/>
            <person name="Hurst S.M."/>
            <person name="Lucas M."/>
            <person name="Rochet M."/>
            <person name="Gaillardin C."/>
            <person name="Tallada V.A."/>
            <person name="Garzon A."/>
            <person name="Thode G."/>
            <person name="Daga R.R."/>
            <person name="Cruzado L."/>
            <person name="Jimenez J."/>
            <person name="Sanchez M."/>
            <person name="del Rey F."/>
            <person name="Benito J."/>
            <person name="Dominguez A."/>
            <person name="Revuelta J.L."/>
            <person name="Moreno S."/>
            <person name="Armstrong J."/>
            <person name="Forsburg S.L."/>
            <person name="Cerutti L."/>
            <person name="Lowe T."/>
            <person name="McCombie W.R."/>
            <person name="Paulsen I."/>
            <person name="Potashkin J."/>
            <person name="Shpakovski G.V."/>
            <person name="Ussery D."/>
            <person name="Barrell B.G."/>
            <person name="Nurse P."/>
        </authorList>
    </citation>
    <scope>NUCLEOTIDE SEQUENCE [LARGE SCALE GENOMIC DNA]</scope>
    <source>
        <strain>972 / ATCC 24843</strain>
    </source>
</reference>
<reference key="3">
    <citation type="journal article" date="2003" name="Genes Dev.">
        <title>Checkpoint activation regulates mutagenic translesion synthesis.</title>
        <authorList>
            <person name="Kai M."/>
            <person name="Wang T.S.-F."/>
        </authorList>
    </citation>
    <scope>INTERACTION WITH MUG40</scope>
</reference>
<reference key="4">
    <citation type="journal article" date="2006" name="Nat. Biotechnol.">
        <title>ORFeome cloning and global analysis of protein localization in the fission yeast Schizosaccharomyces pombe.</title>
        <authorList>
            <person name="Matsuyama A."/>
            <person name="Arai R."/>
            <person name="Yashiroda Y."/>
            <person name="Shirai A."/>
            <person name="Kamata A."/>
            <person name="Sekido S."/>
            <person name="Kobayashi Y."/>
            <person name="Hashimoto A."/>
            <person name="Hamamoto M."/>
            <person name="Hiraoka Y."/>
            <person name="Horinouchi S."/>
            <person name="Yoshida M."/>
        </authorList>
    </citation>
    <scope>SUBCELLULAR LOCATION [LARGE SCALE ANALYSIS]</scope>
</reference>
<reference key="5">
    <citation type="journal article" date="2008" name="J. Proteome Res.">
        <title>Phosphoproteome analysis of fission yeast.</title>
        <authorList>
            <person name="Wilson-Grady J.T."/>
            <person name="Villen J."/>
            <person name="Gygi S.P."/>
        </authorList>
    </citation>
    <scope>PHOSPHORYLATION [LARGE SCALE ANALYSIS] AT SER-210</scope>
    <scope>IDENTIFICATION BY MASS SPECTROMETRY</scope>
</reference>
<feature type="chain" id="PRO_0000084096" description="Checkpoint protein hus1">
    <location>
        <begin position="1"/>
        <end position="287"/>
    </location>
</feature>
<feature type="modified residue" description="Phosphoserine" evidence="3">
    <location>
        <position position="210"/>
    </location>
</feature>
<organism>
    <name type="scientific">Schizosaccharomyces pombe (strain 972 / ATCC 24843)</name>
    <name type="common">Fission yeast</name>
    <dbReference type="NCBI Taxonomy" id="284812"/>
    <lineage>
        <taxon>Eukaryota</taxon>
        <taxon>Fungi</taxon>
        <taxon>Dikarya</taxon>
        <taxon>Ascomycota</taxon>
        <taxon>Taphrinomycotina</taxon>
        <taxon>Schizosaccharomycetes</taxon>
        <taxon>Schizosaccharomycetales</taxon>
        <taxon>Schizosaccharomycetaceae</taxon>
        <taxon>Schizosaccharomyces</taxon>
    </lineage>
</organism>
<proteinExistence type="evidence at protein level"/>
<evidence type="ECO:0000269" key="1">
    <source>
    </source>
</evidence>
<evidence type="ECO:0000269" key="2">
    <source>
    </source>
</evidence>
<evidence type="ECO:0000269" key="3">
    <source>
    </source>
</evidence>
<evidence type="ECO:0000269" key="4">
    <source>
    </source>
</evidence>
<evidence type="ECO:0000305" key="5"/>
<accession>P78955</accession>
<protein>
    <recommendedName>
        <fullName>Checkpoint protein hus1</fullName>
    </recommendedName>
</protein>
<keyword id="KW-0131">Cell cycle</keyword>
<keyword id="KW-0132">Cell division</keyword>
<keyword id="KW-0963">Cytoplasm</keyword>
<keyword id="KW-0206">Cytoskeleton</keyword>
<keyword id="KW-0227">DNA damage</keyword>
<keyword id="KW-0498">Mitosis</keyword>
<keyword id="KW-0539">Nucleus</keyword>
<keyword id="KW-0597">Phosphoprotein</keyword>
<keyword id="KW-1185">Reference proteome</keyword>
<name>HUS1_SCHPO</name>
<dbReference type="EMBL" id="Y09438">
    <property type="protein sequence ID" value="CAA70588.1"/>
    <property type="molecule type" value="Genomic_DNA"/>
</dbReference>
<dbReference type="EMBL" id="CU329670">
    <property type="protein sequence ID" value="CAB11254.1"/>
    <property type="molecule type" value="Genomic_DNA"/>
</dbReference>
<dbReference type="PIR" id="T43396">
    <property type="entry name" value="T43396"/>
</dbReference>
<dbReference type="RefSeq" id="NP_594739.1">
    <property type="nucleotide sequence ID" value="NM_001020167.2"/>
</dbReference>
<dbReference type="SMR" id="P78955"/>
<dbReference type="BioGRID" id="278240">
    <property type="interactions" value="187"/>
</dbReference>
<dbReference type="FunCoup" id="P78955">
    <property type="interactions" value="388"/>
</dbReference>
<dbReference type="IntAct" id="P78955">
    <property type="interactions" value="1"/>
</dbReference>
<dbReference type="STRING" id="284812.P78955"/>
<dbReference type="iPTMnet" id="P78955"/>
<dbReference type="PaxDb" id="4896-SPAC20G4.04c.1"/>
<dbReference type="EnsemblFungi" id="SPAC20G4.04c.1">
    <property type="protein sequence ID" value="SPAC20G4.04c.1:pep"/>
    <property type="gene ID" value="SPAC20G4.04c"/>
</dbReference>
<dbReference type="GeneID" id="2541746"/>
<dbReference type="KEGG" id="spo:2541746"/>
<dbReference type="PomBase" id="SPAC20G4.04c">
    <property type="gene designation" value="hus1"/>
</dbReference>
<dbReference type="VEuPathDB" id="FungiDB:SPAC20G4.04c"/>
<dbReference type="eggNOG" id="KOG3999">
    <property type="taxonomic scope" value="Eukaryota"/>
</dbReference>
<dbReference type="HOGENOM" id="CLU_035754_0_0_1"/>
<dbReference type="InParanoid" id="P78955"/>
<dbReference type="OMA" id="VCWMRLE"/>
<dbReference type="PhylomeDB" id="P78955"/>
<dbReference type="Reactome" id="R-SPO-176187">
    <property type="pathway name" value="Activation of ATR in response to replication stress"/>
</dbReference>
<dbReference type="PRO" id="PR:P78955"/>
<dbReference type="Proteomes" id="UP000002485">
    <property type="component" value="Chromosome I"/>
</dbReference>
<dbReference type="GO" id="GO:0030896">
    <property type="term" value="C:checkpoint clamp complex"/>
    <property type="evidence" value="ECO:0000314"/>
    <property type="project" value="PomBase"/>
</dbReference>
<dbReference type="GO" id="GO:0140445">
    <property type="term" value="C:chromosome, telomeric repeat region"/>
    <property type="evidence" value="ECO:0000314"/>
    <property type="project" value="PomBase"/>
</dbReference>
<dbReference type="GO" id="GO:0005829">
    <property type="term" value="C:cytosol"/>
    <property type="evidence" value="ECO:0007005"/>
    <property type="project" value="PomBase"/>
</dbReference>
<dbReference type="GO" id="GO:0044732">
    <property type="term" value="C:mitotic spindle pole body"/>
    <property type="evidence" value="ECO:0007005"/>
    <property type="project" value="PomBase"/>
</dbReference>
<dbReference type="GO" id="GO:0005730">
    <property type="term" value="C:nucleolus"/>
    <property type="evidence" value="ECO:0007005"/>
    <property type="project" value="PomBase"/>
</dbReference>
<dbReference type="GO" id="GO:0005634">
    <property type="term" value="C:nucleus"/>
    <property type="evidence" value="ECO:0007005"/>
    <property type="project" value="PomBase"/>
</dbReference>
<dbReference type="GO" id="GO:0035861">
    <property type="term" value="C:site of double-strand break"/>
    <property type="evidence" value="ECO:0000314"/>
    <property type="project" value="PomBase"/>
</dbReference>
<dbReference type="GO" id="GO:0051301">
    <property type="term" value="P:cell division"/>
    <property type="evidence" value="ECO:0007669"/>
    <property type="project" value="UniProtKB-KW"/>
</dbReference>
<dbReference type="GO" id="GO:0000724">
    <property type="term" value="P:double-strand break repair via homologous recombination"/>
    <property type="evidence" value="ECO:0000318"/>
    <property type="project" value="GO_Central"/>
</dbReference>
<dbReference type="GO" id="GO:0044778">
    <property type="term" value="P:meiotic DNA integrity checkpoint signaling"/>
    <property type="evidence" value="ECO:0000318"/>
    <property type="project" value="GO_Central"/>
</dbReference>
<dbReference type="GO" id="GO:0033314">
    <property type="term" value="P:mitotic DNA replication checkpoint signaling"/>
    <property type="evidence" value="ECO:0000315"/>
    <property type="project" value="PomBase"/>
</dbReference>
<dbReference type="GO" id="GO:0031573">
    <property type="term" value="P:mitotic intra-S DNA damage checkpoint signaling"/>
    <property type="evidence" value="ECO:0000315"/>
    <property type="project" value="PomBase"/>
</dbReference>
<dbReference type="GO" id="GO:0006289">
    <property type="term" value="P:nucleotide-excision repair"/>
    <property type="evidence" value="ECO:0000318"/>
    <property type="project" value="GO_Central"/>
</dbReference>
<dbReference type="GO" id="GO:0000723">
    <property type="term" value="P:telomere maintenance"/>
    <property type="evidence" value="ECO:0000315"/>
    <property type="project" value="PomBase"/>
</dbReference>
<dbReference type="Gene3D" id="3.70.10.10">
    <property type="match status" value="1"/>
</dbReference>
<dbReference type="InterPro" id="IPR016580">
    <property type="entry name" value="Cell_cycle_HUS1"/>
</dbReference>
<dbReference type="InterPro" id="IPR046938">
    <property type="entry name" value="DNA_clamp_sf"/>
</dbReference>
<dbReference type="InterPro" id="IPR007150">
    <property type="entry name" value="Hus1/Mec3"/>
</dbReference>
<dbReference type="PANTHER" id="PTHR12900:SF0">
    <property type="entry name" value="CHECKPOINT PROTEIN"/>
    <property type="match status" value="1"/>
</dbReference>
<dbReference type="PANTHER" id="PTHR12900">
    <property type="entry name" value="MITOTIC AND DNA DAMAGE CHECKPOINT PROTEIN HUS1"/>
    <property type="match status" value="1"/>
</dbReference>
<dbReference type="Pfam" id="PF04005">
    <property type="entry name" value="Hus1"/>
    <property type="match status" value="1"/>
</dbReference>
<dbReference type="PIRSF" id="PIRSF011312">
    <property type="entry name" value="Cell_cycle_HUS1"/>
    <property type="match status" value="1"/>
</dbReference>
<dbReference type="SUPFAM" id="SSF55979">
    <property type="entry name" value="DNA clamp"/>
    <property type="match status" value="1"/>
</dbReference>
<comment type="function">
    <text>Essential in controlling the S-M checkpoint that couples mitosis to the completion of DNA replication. It is also required for the response to DNA damage.</text>
</comment>
<comment type="subunit">
    <text evidence="1">Interacts with mug40.</text>
</comment>
<comment type="interaction">
    <interactant intactId="EBI-767597">
        <id>P78955</id>
    </interactant>
    <interactant intactId="EBI-767574">
        <id>Q10159</id>
        <label>myh1</label>
    </interactant>
    <organismsDiffer>false</organismsDiffer>
    <experiments>4</experiments>
</comment>
<comment type="subcellular location">
    <subcellularLocation>
        <location evidence="2">Cytoplasm</location>
    </subcellularLocation>
    <subcellularLocation>
        <location evidence="2">Nucleus</location>
        <location evidence="2">Nucleolus</location>
    </subcellularLocation>
    <subcellularLocation>
        <location evidence="2">Cytoplasm</location>
        <location evidence="2">Cytoskeleton</location>
        <location evidence="2">Microtubule organizing center</location>
        <location evidence="2">Spindle pole body</location>
    </subcellularLocation>
</comment>
<comment type="disruption phenotype">
    <text evidence="4">Cells have a nucleus that is cleaved by the septum or the septum divides the cell into a nucleate and anucleate compartment.</text>
</comment>
<comment type="similarity">
    <text evidence="5">Belongs to the HUS1 family.</text>
</comment>